<reference key="1">
    <citation type="journal article" date="2007" name="Science">
        <title>Legumes symbioses: absence of nod genes in photosynthetic bradyrhizobia.</title>
        <authorList>
            <person name="Giraud E."/>
            <person name="Moulin L."/>
            <person name="Vallenet D."/>
            <person name="Barbe V."/>
            <person name="Cytryn E."/>
            <person name="Avarre J.-C."/>
            <person name="Jaubert M."/>
            <person name="Simon D."/>
            <person name="Cartieaux F."/>
            <person name="Prin Y."/>
            <person name="Bena G."/>
            <person name="Hannibal L."/>
            <person name="Fardoux J."/>
            <person name="Kojadinovic M."/>
            <person name="Vuillet L."/>
            <person name="Lajus A."/>
            <person name="Cruveiller S."/>
            <person name="Rouy Z."/>
            <person name="Mangenot S."/>
            <person name="Segurens B."/>
            <person name="Dossat C."/>
            <person name="Franck W.L."/>
            <person name="Chang W.-S."/>
            <person name="Saunders E."/>
            <person name="Bruce D."/>
            <person name="Richardson P."/>
            <person name="Normand P."/>
            <person name="Dreyfus B."/>
            <person name="Pignol D."/>
            <person name="Stacey G."/>
            <person name="Emerich D."/>
            <person name="Vermeglio A."/>
            <person name="Medigue C."/>
            <person name="Sadowsky M."/>
        </authorList>
    </citation>
    <scope>NUCLEOTIDE SEQUENCE [LARGE SCALE GENOMIC DNA]</scope>
    <source>
        <strain>BTAi1 / ATCC BAA-1182</strain>
    </source>
</reference>
<comment type="function">
    <text evidence="1">RuBisCO catalyzes two reactions: the carboxylation of D-ribulose 1,5-bisphosphate, the primary event in carbon dioxide fixation, as well as the oxidative fragmentation of the pentose substrate. Both reactions occur simultaneously and in competition at the same active site.</text>
</comment>
<comment type="catalytic activity">
    <reaction evidence="1">
        <text>2 (2R)-3-phosphoglycerate + 2 H(+) = D-ribulose 1,5-bisphosphate + CO2 + H2O</text>
        <dbReference type="Rhea" id="RHEA:23124"/>
        <dbReference type="ChEBI" id="CHEBI:15377"/>
        <dbReference type="ChEBI" id="CHEBI:15378"/>
        <dbReference type="ChEBI" id="CHEBI:16526"/>
        <dbReference type="ChEBI" id="CHEBI:57870"/>
        <dbReference type="ChEBI" id="CHEBI:58272"/>
        <dbReference type="EC" id="4.1.1.39"/>
    </reaction>
</comment>
<comment type="catalytic activity">
    <reaction evidence="1">
        <text>D-ribulose 1,5-bisphosphate + O2 = 2-phosphoglycolate + (2R)-3-phosphoglycerate + 2 H(+)</text>
        <dbReference type="Rhea" id="RHEA:36631"/>
        <dbReference type="ChEBI" id="CHEBI:15378"/>
        <dbReference type="ChEBI" id="CHEBI:15379"/>
        <dbReference type="ChEBI" id="CHEBI:57870"/>
        <dbReference type="ChEBI" id="CHEBI:58033"/>
        <dbReference type="ChEBI" id="CHEBI:58272"/>
    </reaction>
</comment>
<comment type="cofactor">
    <cofactor evidence="1">
        <name>Mg(2+)</name>
        <dbReference type="ChEBI" id="CHEBI:18420"/>
    </cofactor>
    <text evidence="1">Binds 1 Mg(2+) ion per subunit.</text>
</comment>
<comment type="subunit">
    <text evidence="1">Heterohexadecamer of 8 large chains and 8 small chains.</text>
</comment>
<comment type="miscellaneous">
    <text evidence="1">The basic functional RuBisCO is composed of a large chain homodimer in a 'head-to-tail' conformation. In form I RuBisCO this homodimer is arranged in a barrel-like tetramer with the small subunits forming a tetrameric 'cap' on each end of the 'barrel'.</text>
</comment>
<comment type="similarity">
    <text evidence="1">Belongs to the RuBisCO large chain family. Type I subfamily.</text>
</comment>
<evidence type="ECO:0000255" key="1">
    <source>
        <dbReference type="HAMAP-Rule" id="MF_01338"/>
    </source>
</evidence>
<proteinExistence type="inferred from homology"/>
<keyword id="KW-0113">Calvin cycle</keyword>
<keyword id="KW-0120">Carbon dioxide fixation</keyword>
<keyword id="KW-0456">Lyase</keyword>
<keyword id="KW-0460">Magnesium</keyword>
<keyword id="KW-0479">Metal-binding</keyword>
<keyword id="KW-0503">Monooxygenase</keyword>
<keyword id="KW-0560">Oxidoreductase</keyword>
<keyword id="KW-0602">Photosynthesis</keyword>
<keyword id="KW-1185">Reference proteome</keyword>
<sequence length="486" mass="53975">MNDQSITVRGKDRYKSGVMEYKKMGYWEPSYQPKDTDVIALFRVTPQDGVDPVEACAAVAGESSTATWTVVWTDRLTAAEKYRAKCYRVEPVPGSPGSYFAYIAYDLDLFEPGSIANLTASIIGNVFGFKPLKALRLEDMRLPVAYVKTFQGPATGIVVERERLDKFGRPLLGATVKPKLGLSGRNYGRVVYEALKGGLDFTKDDENINSQPFMHWRERFLYCMEAVNKAQAATGEIKGTYLNVTAATMEDMYERAEFAKELGSTIIMIDLVIGYTAIQSMAKWARRNDMILHLHRAGHSTYTRQRAHGVSFRVIAKWMRLAGVDHIHAGTVVGKLEGDPNTTRGYYDICREDFNPMRLEHGVFFDQHWASLNKLMPVASGGIHAGQMHQLLDLLGEDVVLQFGGGTIGHPRGIAAGATANRVALEAMILARNEGRDYVHEGPEILAKAAQTCTPLREALEIWKDVTFNYESTDSPDFVPTVTPAA</sequence>
<accession>A5EQ63</accession>
<gene>
    <name evidence="1" type="primary">cbbL3</name>
    <name type="ordered locus">BBta_6397</name>
</gene>
<organism>
    <name type="scientific">Bradyrhizobium sp. (strain BTAi1 / ATCC BAA-1182)</name>
    <dbReference type="NCBI Taxonomy" id="288000"/>
    <lineage>
        <taxon>Bacteria</taxon>
        <taxon>Pseudomonadati</taxon>
        <taxon>Pseudomonadota</taxon>
        <taxon>Alphaproteobacteria</taxon>
        <taxon>Hyphomicrobiales</taxon>
        <taxon>Nitrobacteraceae</taxon>
        <taxon>Bradyrhizobium</taxon>
    </lineage>
</organism>
<protein>
    <recommendedName>
        <fullName evidence="1">Ribulose bisphosphate carboxylase large chain 3</fullName>
        <shortName evidence="1">RuBisCO large subunit 3</shortName>
        <ecNumber evidence="1">4.1.1.39</ecNumber>
    </recommendedName>
</protein>
<name>RBL1C_BRASB</name>
<feature type="chain" id="PRO_0000299960" description="Ribulose bisphosphate carboxylase large chain 3">
    <location>
        <begin position="1"/>
        <end position="486"/>
    </location>
</feature>
<feature type="active site" description="Proton acceptor" evidence="1">
    <location>
        <position position="177"/>
    </location>
</feature>
<feature type="active site" description="Proton acceptor" evidence="1">
    <location>
        <position position="295"/>
    </location>
</feature>
<feature type="binding site" description="in homodimeric partner" evidence="1">
    <location>
        <position position="125"/>
    </location>
    <ligand>
        <name>substrate</name>
    </ligand>
</feature>
<feature type="binding site" evidence="1">
    <location>
        <position position="175"/>
    </location>
    <ligand>
        <name>substrate</name>
    </ligand>
</feature>
<feature type="binding site" evidence="1">
    <location>
        <position position="179"/>
    </location>
    <ligand>
        <name>substrate</name>
    </ligand>
</feature>
<feature type="binding site" description="via carbamate group" evidence="1">
    <location>
        <position position="203"/>
    </location>
    <ligand>
        <name>Mg(2+)</name>
        <dbReference type="ChEBI" id="CHEBI:18420"/>
    </ligand>
</feature>
<feature type="binding site" evidence="1">
    <location>
        <position position="205"/>
    </location>
    <ligand>
        <name>Mg(2+)</name>
        <dbReference type="ChEBI" id="CHEBI:18420"/>
    </ligand>
</feature>
<feature type="binding site" evidence="1">
    <location>
        <position position="206"/>
    </location>
    <ligand>
        <name>Mg(2+)</name>
        <dbReference type="ChEBI" id="CHEBI:18420"/>
    </ligand>
</feature>
<feature type="binding site" evidence="1">
    <location>
        <position position="296"/>
    </location>
    <ligand>
        <name>substrate</name>
    </ligand>
</feature>
<feature type="binding site" evidence="1">
    <location>
        <position position="328"/>
    </location>
    <ligand>
        <name>substrate</name>
    </ligand>
</feature>
<feature type="binding site" evidence="1">
    <location>
        <position position="380"/>
    </location>
    <ligand>
        <name>substrate</name>
    </ligand>
</feature>
<feature type="site" description="Transition state stabilizer" evidence="1">
    <location>
        <position position="335"/>
    </location>
</feature>
<feature type="modified residue" description="N6-carboxylysine" evidence="1">
    <location>
        <position position="203"/>
    </location>
</feature>
<dbReference type="EC" id="4.1.1.39" evidence="1"/>
<dbReference type="EMBL" id="CP000494">
    <property type="protein sequence ID" value="ABQ38307.1"/>
    <property type="molecule type" value="Genomic_DNA"/>
</dbReference>
<dbReference type="RefSeq" id="WP_012046248.1">
    <property type="nucleotide sequence ID" value="NC_009485.1"/>
</dbReference>
<dbReference type="SMR" id="A5EQ63"/>
<dbReference type="STRING" id="288000.BBta_6397"/>
<dbReference type="KEGG" id="bbt:BBta_6397"/>
<dbReference type="eggNOG" id="COG1850">
    <property type="taxonomic scope" value="Bacteria"/>
</dbReference>
<dbReference type="HOGENOM" id="CLU_031450_2_0_5"/>
<dbReference type="OrthoDB" id="9764279at2"/>
<dbReference type="Proteomes" id="UP000000246">
    <property type="component" value="Chromosome"/>
</dbReference>
<dbReference type="GO" id="GO:0000287">
    <property type="term" value="F:magnesium ion binding"/>
    <property type="evidence" value="ECO:0007669"/>
    <property type="project" value="UniProtKB-UniRule"/>
</dbReference>
<dbReference type="GO" id="GO:0004497">
    <property type="term" value="F:monooxygenase activity"/>
    <property type="evidence" value="ECO:0007669"/>
    <property type="project" value="UniProtKB-KW"/>
</dbReference>
<dbReference type="GO" id="GO:0016984">
    <property type="term" value="F:ribulose-bisphosphate carboxylase activity"/>
    <property type="evidence" value="ECO:0007669"/>
    <property type="project" value="UniProtKB-UniRule"/>
</dbReference>
<dbReference type="GO" id="GO:0019253">
    <property type="term" value="P:reductive pentose-phosphate cycle"/>
    <property type="evidence" value="ECO:0007669"/>
    <property type="project" value="UniProtKB-UniRule"/>
</dbReference>
<dbReference type="CDD" id="cd08212">
    <property type="entry name" value="RuBisCO_large_I"/>
    <property type="match status" value="1"/>
</dbReference>
<dbReference type="Gene3D" id="3.20.20.110">
    <property type="entry name" value="Ribulose bisphosphate carboxylase, large subunit, C-terminal domain"/>
    <property type="match status" value="1"/>
</dbReference>
<dbReference type="Gene3D" id="3.30.70.150">
    <property type="entry name" value="RuBisCO large subunit, N-terminal domain"/>
    <property type="match status" value="1"/>
</dbReference>
<dbReference type="HAMAP" id="MF_01338">
    <property type="entry name" value="RuBisCO_L_type1"/>
    <property type="match status" value="1"/>
</dbReference>
<dbReference type="InterPro" id="IPR033966">
    <property type="entry name" value="RuBisCO"/>
</dbReference>
<dbReference type="InterPro" id="IPR020878">
    <property type="entry name" value="RuBisCo_large_chain_AS"/>
</dbReference>
<dbReference type="InterPro" id="IPR000685">
    <property type="entry name" value="RuBisCO_lsu_C"/>
</dbReference>
<dbReference type="InterPro" id="IPR036376">
    <property type="entry name" value="RuBisCO_lsu_C_sf"/>
</dbReference>
<dbReference type="InterPro" id="IPR017443">
    <property type="entry name" value="RuBisCO_lsu_fd_N"/>
</dbReference>
<dbReference type="InterPro" id="IPR036422">
    <property type="entry name" value="RuBisCO_lsu_N_sf"/>
</dbReference>
<dbReference type="InterPro" id="IPR020888">
    <property type="entry name" value="RuBisCO_lsuI"/>
</dbReference>
<dbReference type="NCBIfam" id="NF003252">
    <property type="entry name" value="PRK04208.1"/>
    <property type="match status" value="1"/>
</dbReference>
<dbReference type="PANTHER" id="PTHR42704">
    <property type="entry name" value="RIBULOSE BISPHOSPHATE CARBOXYLASE"/>
    <property type="match status" value="1"/>
</dbReference>
<dbReference type="PANTHER" id="PTHR42704:SF17">
    <property type="entry name" value="RIBULOSE BISPHOSPHATE CARBOXYLASE LARGE CHAIN"/>
    <property type="match status" value="1"/>
</dbReference>
<dbReference type="Pfam" id="PF00016">
    <property type="entry name" value="RuBisCO_large"/>
    <property type="match status" value="1"/>
</dbReference>
<dbReference type="Pfam" id="PF02788">
    <property type="entry name" value="RuBisCO_large_N"/>
    <property type="match status" value="1"/>
</dbReference>
<dbReference type="SFLD" id="SFLDG01052">
    <property type="entry name" value="RuBisCO"/>
    <property type="match status" value="1"/>
</dbReference>
<dbReference type="SFLD" id="SFLDS00014">
    <property type="entry name" value="RuBisCO"/>
    <property type="match status" value="1"/>
</dbReference>
<dbReference type="SFLD" id="SFLDG00301">
    <property type="entry name" value="RuBisCO-like_proteins"/>
    <property type="match status" value="1"/>
</dbReference>
<dbReference type="SUPFAM" id="SSF51649">
    <property type="entry name" value="RuBisCo, C-terminal domain"/>
    <property type="match status" value="1"/>
</dbReference>
<dbReference type="SUPFAM" id="SSF54966">
    <property type="entry name" value="RuBisCO, large subunit, small (N-terminal) domain"/>
    <property type="match status" value="1"/>
</dbReference>
<dbReference type="PROSITE" id="PS00157">
    <property type="entry name" value="RUBISCO_LARGE"/>
    <property type="match status" value="1"/>
</dbReference>